<sequence length="92" mass="10294">MARSVWKGPFVDGYLFGKAEASRASGRNEVIKIWSRRSTILPQFVGLTFGVYNGHKFLPVQVTENMVGHKFGEFSPTRTYTGHGSDKKSKRG</sequence>
<name>RS19_GLUOX</name>
<keyword id="KW-1185">Reference proteome</keyword>
<keyword id="KW-0687">Ribonucleoprotein</keyword>
<keyword id="KW-0689">Ribosomal protein</keyword>
<keyword id="KW-0694">RNA-binding</keyword>
<keyword id="KW-0699">rRNA-binding</keyword>
<organism>
    <name type="scientific">Gluconobacter oxydans (strain 621H)</name>
    <name type="common">Gluconobacter suboxydans</name>
    <dbReference type="NCBI Taxonomy" id="290633"/>
    <lineage>
        <taxon>Bacteria</taxon>
        <taxon>Pseudomonadati</taxon>
        <taxon>Pseudomonadota</taxon>
        <taxon>Alphaproteobacteria</taxon>
        <taxon>Acetobacterales</taxon>
        <taxon>Acetobacteraceae</taxon>
        <taxon>Gluconobacter</taxon>
    </lineage>
</organism>
<proteinExistence type="inferred from homology"/>
<accession>Q5FTY7</accession>
<gene>
    <name evidence="1" type="primary">rpsS</name>
    <name type="ordered locus">GOX0376</name>
</gene>
<dbReference type="EMBL" id="CP000009">
    <property type="protein sequence ID" value="AAW60159.1"/>
    <property type="molecule type" value="Genomic_DNA"/>
</dbReference>
<dbReference type="RefSeq" id="WP_011251962.1">
    <property type="nucleotide sequence ID" value="NZ_LT900338.1"/>
</dbReference>
<dbReference type="SMR" id="Q5FTY7"/>
<dbReference type="STRING" id="290633.GOX0376"/>
<dbReference type="GeneID" id="76195078"/>
<dbReference type="KEGG" id="gox:GOX0376"/>
<dbReference type="eggNOG" id="COG0185">
    <property type="taxonomic scope" value="Bacteria"/>
</dbReference>
<dbReference type="HOGENOM" id="CLU_144911_0_1_5"/>
<dbReference type="Proteomes" id="UP000006375">
    <property type="component" value="Chromosome"/>
</dbReference>
<dbReference type="GO" id="GO:0005737">
    <property type="term" value="C:cytoplasm"/>
    <property type="evidence" value="ECO:0007669"/>
    <property type="project" value="UniProtKB-ARBA"/>
</dbReference>
<dbReference type="GO" id="GO:0015935">
    <property type="term" value="C:small ribosomal subunit"/>
    <property type="evidence" value="ECO:0007669"/>
    <property type="project" value="InterPro"/>
</dbReference>
<dbReference type="GO" id="GO:0019843">
    <property type="term" value="F:rRNA binding"/>
    <property type="evidence" value="ECO:0007669"/>
    <property type="project" value="UniProtKB-UniRule"/>
</dbReference>
<dbReference type="GO" id="GO:0003735">
    <property type="term" value="F:structural constituent of ribosome"/>
    <property type="evidence" value="ECO:0007669"/>
    <property type="project" value="InterPro"/>
</dbReference>
<dbReference type="GO" id="GO:0000028">
    <property type="term" value="P:ribosomal small subunit assembly"/>
    <property type="evidence" value="ECO:0007669"/>
    <property type="project" value="TreeGrafter"/>
</dbReference>
<dbReference type="GO" id="GO:0006412">
    <property type="term" value="P:translation"/>
    <property type="evidence" value="ECO:0007669"/>
    <property type="project" value="UniProtKB-UniRule"/>
</dbReference>
<dbReference type="FunFam" id="3.30.860.10:FF:000001">
    <property type="entry name" value="30S ribosomal protein S19"/>
    <property type="match status" value="1"/>
</dbReference>
<dbReference type="Gene3D" id="3.30.860.10">
    <property type="entry name" value="30s Ribosomal Protein S19, Chain A"/>
    <property type="match status" value="1"/>
</dbReference>
<dbReference type="HAMAP" id="MF_00531">
    <property type="entry name" value="Ribosomal_uS19"/>
    <property type="match status" value="1"/>
</dbReference>
<dbReference type="InterPro" id="IPR002222">
    <property type="entry name" value="Ribosomal_uS19"/>
</dbReference>
<dbReference type="InterPro" id="IPR005732">
    <property type="entry name" value="Ribosomal_uS19_bac-type"/>
</dbReference>
<dbReference type="InterPro" id="IPR020934">
    <property type="entry name" value="Ribosomal_uS19_CS"/>
</dbReference>
<dbReference type="InterPro" id="IPR023575">
    <property type="entry name" value="Ribosomal_uS19_SF"/>
</dbReference>
<dbReference type="NCBIfam" id="TIGR01050">
    <property type="entry name" value="rpsS_bact"/>
    <property type="match status" value="1"/>
</dbReference>
<dbReference type="PANTHER" id="PTHR11880">
    <property type="entry name" value="RIBOSOMAL PROTEIN S19P FAMILY MEMBER"/>
    <property type="match status" value="1"/>
</dbReference>
<dbReference type="PANTHER" id="PTHR11880:SF8">
    <property type="entry name" value="SMALL RIBOSOMAL SUBUNIT PROTEIN US19M"/>
    <property type="match status" value="1"/>
</dbReference>
<dbReference type="Pfam" id="PF00203">
    <property type="entry name" value="Ribosomal_S19"/>
    <property type="match status" value="1"/>
</dbReference>
<dbReference type="PIRSF" id="PIRSF002144">
    <property type="entry name" value="Ribosomal_S19"/>
    <property type="match status" value="1"/>
</dbReference>
<dbReference type="PRINTS" id="PR00975">
    <property type="entry name" value="RIBOSOMALS19"/>
</dbReference>
<dbReference type="SUPFAM" id="SSF54570">
    <property type="entry name" value="Ribosomal protein S19"/>
    <property type="match status" value="1"/>
</dbReference>
<dbReference type="PROSITE" id="PS00323">
    <property type="entry name" value="RIBOSOMAL_S19"/>
    <property type="match status" value="1"/>
</dbReference>
<evidence type="ECO:0000255" key="1">
    <source>
        <dbReference type="HAMAP-Rule" id="MF_00531"/>
    </source>
</evidence>
<evidence type="ECO:0000256" key="2">
    <source>
        <dbReference type="SAM" id="MobiDB-lite"/>
    </source>
</evidence>
<evidence type="ECO:0000305" key="3"/>
<reference key="1">
    <citation type="journal article" date="2005" name="Nat. Biotechnol.">
        <title>Complete genome sequence of the acetic acid bacterium Gluconobacter oxydans.</title>
        <authorList>
            <person name="Prust C."/>
            <person name="Hoffmeister M."/>
            <person name="Liesegang H."/>
            <person name="Wiezer A."/>
            <person name="Fricke W.F."/>
            <person name="Ehrenreich A."/>
            <person name="Gottschalk G."/>
            <person name="Deppenmeier U."/>
        </authorList>
    </citation>
    <scope>NUCLEOTIDE SEQUENCE [LARGE SCALE GENOMIC DNA]</scope>
    <source>
        <strain>621H</strain>
    </source>
</reference>
<protein>
    <recommendedName>
        <fullName evidence="1">Small ribosomal subunit protein uS19</fullName>
    </recommendedName>
    <alternativeName>
        <fullName evidence="3">30S ribosomal protein S19</fullName>
    </alternativeName>
</protein>
<comment type="function">
    <text evidence="1">Protein S19 forms a complex with S13 that binds strongly to the 16S ribosomal RNA.</text>
</comment>
<comment type="similarity">
    <text evidence="1">Belongs to the universal ribosomal protein uS19 family.</text>
</comment>
<feature type="chain" id="PRO_0000265366" description="Small ribosomal subunit protein uS19">
    <location>
        <begin position="1"/>
        <end position="92"/>
    </location>
</feature>
<feature type="region of interest" description="Disordered" evidence="2">
    <location>
        <begin position="72"/>
        <end position="92"/>
    </location>
</feature>